<proteinExistence type="inferred from homology"/>
<keyword id="KW-0687">Ribonucleoprotein</keyword>
<keyword id="KW-0689">Ribosomal protein</keyword>
<keyword id="KW-0694">RNA-binding</keyword>
<keyword id="KW-0699">rRNA-binding</keyword>
<comment type="function">
    <text evidence="1">One of the primary rRNA binding proteins. Required for association of the 30S and 50S subunits to form the 70S ribosome, for tRNA binding and peptide bond formation. It has been suggested to have peptidyltransferase activity; this is somewhat controversial. Makes several contacts with the 16S rRNA in the 70S ribosome.</text>
</comment>
<comment type="subunit">
    <text evidence="1">Part of the 50S ribosomal subunit. Forms a bridge to the 30S subunit in the 70S ribosome.</text>
</comment>
<comment type="similarity">
    <text evidence="1">Belongs to the universal ribosomal protein uL2 family.</text>
</comment>
<reference key="1">
    <citation type="journal article" date="2011" name="Appl. Environ. Microbiol.">
        <title>Genomic potential of Marinobacter aquaeolei, a biogeochemical 'opportunitroph'.</title>
        <authorList>
            <person name="Singer E."/>
            <person name="Webb E.A."/>
            <person name="Nelson W.C."/>
            <person name="Heidelberg J.F."/>
            <person name="Ivanova N."/>
            <person name="Pati A."/>
            <person name="Edwards K.J."/>
        </authorList>
    </citation>
    <scope>NUCLEOTIDE SEQUENCE [LARGE SCALE GENOMIC DNA]</scope>
    <source>
        <strain>ATCC 700491 / DSM 11845 / VT8</strain>
    </source>
</reference>
<dbReference type="EMBL" id="CP000514">
    <property type="protein sequence ID" value="ABM17819.1"/>
    <property type="molecule type" value="Genomic_DNA"/>
</dbReference>
<dbReference type="RefSeq" id="WP_011784248.1">
    <property type="nucleotide sequence ID" value="NC_008740.1"/>
</dbReference>
<dbReference type="SMR" id="A1TYK0"/>
<dbReference type="STRING" id="351348.Maqu_0722"/>
<dbReference type="GeneID" id="31820097"/>
<dbReference type="KEGG" id="maq:Maqu_0722"/>
<dbReference type="eggNOG" id="COG0090">
    <property type="taxonomic scope" value="Bacteria"/>
</dbReference>
<dbReference type="HOGENOM" id="CLU_036235_2_1_6"/>
<dbReference type="OrthoDB" id="9778722at2"/>
<dbReference type="Proteomes" id="UP000000998">
    <property type="component" value="Chromosome"/>
</dbReference>
<dbReference type="GO" id="GO:0015934">
    <property type="term" value="C:large ribosomal subunit"/>
    <property type="evidence" value="ECO:0007669"/>
    <property type="project" value="InterPro"/>
</dbReference>
<dbReference type="GO" id="GO:0019843">
    <property type="term" value="F:rRNA binding"/>
    <property type="evidence" value="ECO:0007669"/>
    <property type="project" value="UniProtKB-UniRule"/>
</dbReference>
<dbReference type="GO" id="GO:0003735">
    <property type="term" value="F:structural constituent of ribosome"/>
    <property type="evidence" value="ECO:0007669"/>
    <property type="project" value="InterPro"/>
</dbReference>
<dbReference type="GO" id="GO:0016740">
    <property type="term" value="F:transferase activity"/>
    <property type="evidence" value="ECO:0007669"/>
    <property type="project" value="InterPro"/>
</dbReference>
<dbReference type="GO" id="GO:0002181">
    <property type="term" value="P:cytoplasmic translation"/>
    <property type="evidence" value="ECO:0007669"/>
    <property type="project" value="TreeGrafter"/>
</dbReference>
<dbReference type="FunFam" id="2.30.30.30:FF:000001">
    <property type="entry name" value="50S ribosomal protein L2"/>
    <property type="match status" value="1"/>
</dbReference>
<dbReference type="FunFam" id="2.40.50.140:FF:000003">
    <property type="entry name" value="50S ribosomal protein L2"/>
    <property type="match status" value="1"/>
</dbReference>
<dbReference type="FunFam" id="4.10.950.10:FF:000001">
    <property type="entry name" value="50S ribosomal protein L2"/>
    <property type="match status" value="1"/>
</dbReference>
<dbReference type="Gene3D" id="2.30.30.30">
    <property type="match status" value="1"/>
</dbReference>
<dbReference type="Gene3D" id="2.40.50.140">
    <property type="entry name" value="Nucleic acid-binding proteins"/>
    <property type="match status" value="1"/>
</dbReference>
<dbReference type="Gene3D" id="4.10.950.10">
    <property type="entry name" value="Ribosomal protein L2, domain 3"/>
    <property type="match status" value="1"/>
</dbReference>
<dbReference type="HAMAP" id="MF_01320_B">
    <property type="entry name" value="Ribosomal_uL2_B"/>
    <property type="match status" value="1"/>
</dbReference>
<dbReference type="InterPro" id="IPR012340">
    <property type="entry name" value="NA-bd_OB-fold"/>
</dbReference>
<dbReference type="InterPro" id="IPR014722">
    <property type="entry name" value="Rib_uL2_dom2"/>
</dbReference>
<dbReference type="InterPro" id="IPR002171">
    <property type="entry name" value="Ribosomal_uL2"/>
</dbReference>
<dbReference type="InterPro" id="IPR005880">
    <property type="entry name" value="Ribosomal_uL2_bac/org-type"/>
</dbReference>
<dbReference type="InterPro" id="IPR022669">
    <property type="entry name" value="Ribosomal_uL2_C"/>
</dbReference>
<dbReference type="InterPro" id="IPR022671">
    <property type="entry name" value="Ribosomal_uL2_CS"/>
</dbReference>
<dbReference type="InterPro" id="IPR014726">
    <property type="entry name" value="Ribosomal_uL2_dom3"/>
</dbReference>
<dbReference type="InterPro" id="IPR022666">
    <property type="entry name" value="Ribosomal_uL2_RNA-bd_dom"/>
</dbReference>
<dbReference type="InterPro" id="IPR008991">
    <property type="entry name" value="Translation_prot_SH3-like_sf"/>
</dbReference>
<dbReference type="NCBIfam" id="TIGR01171">
    <property type="entry name" value="rplB_bact"/>
    <property type="match status" value="1"/>
</dbReference>
<dbReference type="PANTHER" id="PTHR13691:SF5">
    <property type="entry name" value="LARGE RIBOSOMAL SUBUNIT PROTEIN UL2M"/>
    <property type="match status" value="1"/>
</dbReference>
<dbReference type="PANTHER" id="PTHR13691">
    <property type="entry name" value="RIBOSOMAL PROTEIN L2"/>
    <property type="match status" value="1"/>
</dbReference>
<dbReference type="Pfam" id="PF00181">
    <property type="entry name" value="Ribosomal_L2"/>
    <property type="match status" value="1"/>
</dbReference>
<dbReference type="Pfam" id="PF03947">
    <property type="entry name" value="Ribosomal_L2_C"/>
    <property type="match status" value="1"/>
</dbReference>
<dbReference type="PIRSF" id="PIRSF002158">
    <property type="entry name" value="Ribosomal_L2"/>
    <property type="match status" value="1"/>
</dbReference>
<dbReference type="SMART" id="SM01383">
    <property type="entry name" value="Ribosomal_L2"/>
    <property type="match status" value="1"/>
</dbReference>
<dbReference type="SMART" id="SM01382">
    <property type="entry name" value="Ribosomal_L2_C"/>
    <property type="match status" value="1"/>
</dbReference>
<dbReference type="SUPFAM" id="SSF50249">
    <property type="entry name" value="Nucleic acid-binding proteins"/>
    <property type="match status" value="1"/>
</dbReference>
<dbReference type="SUPFAM" id="SSF50104">
    <property type="entry name" value="Translation proteins SH3-like domain"/>
    <property type="match status" value="1"/>
</dbReference>
<dbReference type="PROSITE" id="PS00467">
    <property type="entry name" value="RIBOSOMAL_L2"/>
    <property type="match status" value="1"/>
</dbReference>
<gene>
    <name evidence="1" type="primary">rplB</name>
    <name type="ordered locus">Maqu_0722</name>
</gene>
<sequence length="275" mass="30050">MPIVKTKPTSAGRRHVVKLYNPDLHKGRPYEPLVETKSKSGGRNNVGRITTRHIGGGHKQHYRVIDFKRTKDGIPAVIERLEYDPNRSAHIALVKYADGERRYIIAPKGMKAGDPVRSGVDAPIKVGSTLPLRNIPVGSVIHCVELKPGKGAQLARSAGASVQLVAREGAYATIRLRSGEMRKVLVDCRATLGEVSNSEHSLKQLGKAGASRWRGKRPTVRGVAMNPVDHPHGGGEGRTSGGRHPVTPWGVPTKGHKTRKNKRTDKMIVRRRSAK</sequence>
<accession>A1TYK0</accession>
<organism>
    <name type="scientific">Marinobacter nauticus (strain ATCC 700491 / DSM 11845 / VT8)</name>
    <name type="common">Marinobacter aquaeolei</name>
    <dbReference type="NCBI Taxonomy" id="351348"/>
    <lineage>
        <taxon>Bacteria</taxon>
        <taxon>Pseudomonadati</taxon>
        <taxon>Pseudomonadota</taxon>
        <taxon>Gammaproteobacteria</taxon>
        <taxon>Pseudomonadales</taxon>
        <taxon>Marinobacteraceae</taxon>
        <taxon>Marinobacter</taxon>
    </lineage>
</organism>
<name>RL2_MARN8</name>
<evidence type="ECO:0000255" key="1">
    <source>
        <dbReference type="HAMAP-Rule" id="MF_01320"/>
    </source>
</evidence>
<evidence type="ECO:0000256" key="2">
    <source>
        <dbReference type="SAM" id="MobiDB-lite"/>
    </source>
</evidence>
<evidence type="ECO:0000305" key="3"/>
<feature type="chain" id="PRO_0000309952" description="Large ribosomal subunit protein uL2">
    <location>
        <begin position="1"/>
        <end position="275"/>
    </location>
</feature>
<feature type="region of interest" description="Disordered" evidence="2">
    <location>
        <begin position="28"/>
        <end position="53"/>
    </location>
</feature>
<feature type="region of interest" description="Disordered" evidence="2">
    <location>
        <begin position="222"/>
        <end position="275"/>
    </location>
</feature>
<feature type="compositionally biased region" description="Basic and acidic residues" evidence="2">
    <location>
        <begin position="28"/>
        <end position="38"/>
    </location>
</feature>
<feature type="compositionally biased region" description="Basic residues" evidence="2">
    <location>
        <begin position="254"/>
        <end position="275"/>
    </location>
</feature>
<protein>
    <recommendedName>
        <fullName evidence="1">Large ribosomal subunit protein uL2</fullName>
    </recommendedName>
    <alternativeName>
        <fullName evidence="3">50S ribosomal protein L2</fullName>
    </alternativeName>
</protein>